<sequence>MDFNLSKELQMLQKEVRNFVNKKIVPFADQWDNENHFPYEEAVRPMGELGFFGTVIPEEYGGEGMDQGWLAAMIVTEEIARGSSALRVQLNMEVLGCAYTILTYGSEALKKKYVPKLSSAEFLGGFGITEPDAGSDVMAMSSTAEDKGDHWLLNGSKTWISNAAQADVLIYYAYTDKAAGSRGLSAFVIEPRNFPGIKTSNLEKLGSHASPTGELFLDNVKVPKENILGKPGDGARIVFGSLNHTRLSAAAGGVGLAQACLDAAIKYCNERRQFGKPIGDFQMNQDMIAQMAVEVEAARLLAYKAAAAKDEGRLNNGLDVAMAKYAAGEAVSKCANYAMRILGAYGYSTEYPVARFYRDAPTYYMVEGSANICKMIIALDQLGVRKANR</sequence>
<name>ACD_DESML</name>
<gene>
    <name type="primary">Acd</name>
</gene>
<evidence type="ECO:0000269" key="1">
    <source>
    </source>
</evidence>
<evidence type="ECO:0000269" key="2">
    <source>
    </source>
</evidence>
<evidence type="ECO:0000305" key="3"/>
<evidence type="ECO:0007829" key="4">
    <source>
        <dbReference type="PDB" id="3MPI"/>
    </source>
</evidence>
<evidence type="ECO:0007829" key="5">
    <source>
        <dbReference type="PDB" id="3MPJ"/>
    </source>
</evidence>
<keyword id="KW-0002">3D-structure</keyword>
<keyword id="KW-0058">Aromatic hydrocarbons catabolism</keyword>
<keyword id="KW-0274">FAD</keyword>
<keyword id="KW-0285">Flavoprotein</keyword>
<keyword id="KW-0547">Nucleotide-binding</keyword>
<keyword id="KW-0560">Oxidoreductase</keyword>
<reference key="1">
    <citation type="journal article" date="2009" name="J. Bacteriol.">
        <title>Decarboxylating and nondecarboxylating glutaryl-coenzyme A dehydrogenases in the aromatic metabolism of obligately anaerobic bacteria.</title>
        <authorList>
            <person name="Wischgoll S."/>
            <person name="Taubert M."/>
            <person name="Peters F."/>
            <person name="Jehmlich N."/>
            <person name="von Bergen M."/>
            <person name="Boll M."/>
        </authorList>
    </citation>
    <scope>NUCLEOTIDE SEQUENCE [GENOMIC DNA]</scope>
    <scope>FUNCTION</scope>
    <scope>CATALYTIC ACTIVITY</scope>
    <scope>SUBUNIT</scope>
    <scope>PATHWAY</scope>
    <scope>COFACTOR</scope>
    <scope>ACTIVITY REGULATION</scope>
    <source>
        <strain>ATCC 33890 / DSM 2059 / Goettingen / 1be1</strain>
    </source>
</reference>
<reference key="2">
    <citation type="journal article" date="2010" name="Biochemistry">
        <title>Structural basis for promoting and preventing decarboxylation in glutaryl-coenzyme A dehydrogenases.</title>
        <authorList>
            <person name="Wischgoll S."/>
            <person name="Demmer U."/>
            <person name="Warkentin E."/>
            <person name="Gunther R."/>
            <person name="Boll M."/>
            <person name="Ermler U."/>
        </authorList>
    </citation>
    <scope>X-RAY CRYSTALLOGRAPHY (2.05 ANGSTROMS) IN COMPLEX WITH FAD AND SUBSTRATE</scope>
    <scope>COFACTOR</scope>
    <scope>MUTAGENESIS OF ALA-80; VAL-88 AND VAL-366</scope>
    <source>
        <strain>ATCC 33890 / DSM 2059 / Goettingen / 1be1</strain>
    </source>
</reference>
<accession>C3UVB0</accession>
<protein>
    <recommendedName>
        <fullName>Glutaryl-CoA dehydrogenase</fullName>
        <shortName>GDH(Des)</shortName>
        <ecNumber>1.3.99.32</ecNumber>
    </recommendedName>
</protein>
<comment type="function">
    <text evidence="1">Catalyzes the dehydrogenation of Glutaryl-CoA to glutaconyl-CoA.</text>
</comment>
<comment type="catalytic activity">
    <reaction evidence="1">
        <text>glutaryl-CoA + A = (2E)-glutaconyl-CoA + AH2</text>
        <dbReference type="Rhea" id="RHEA:47420"/>
        <dbReference type="ChEBI" id="CHEBI:13193"/>
        <dbReference type="ChEBI" id="CHEBI:17499"/>
        <dbReference type="ChEBI" id="CHEBI:57353"/>
        <dbReference type="ChEBI" id="CHEBI:57378"/>
        <dbReference type="EC" id="1.3.99.32"/>
    </reaction>
</comment>
<comment type="cofactor">
    <cofactor evidence="1 2">
        <name>FAD</name>
        <dbReference type="ChEBI" id="CHEBI:57692"/>
    </cofactor>
</comment>
<comment type="activity regulation">
    <text evidence="1">Inhibited by glutaconyl-CoA.</text>
</comment>
<comment type="biophysicochemical properties">
    <kinetics>
        <KM>25 uM for glutaryl-CoA</KM>
        <Vmax>11.0 mmol/min/mg enzyme</Vmax>
    </kinetics>
</comment>
<comment type="pathway">
    <text evidence="1">Aromatic compound metabolism; benzoyl-CoA degradation.</text>
</comment>
<comment type="subunit">
    <text evidence="1 2">Homotetramer.</text>
</comment>
<comment type="similarity">
    <text evidence="3">Belongs to the acyl-CoA dehydrogenase family.</text>
</comment>
<proteinExistence type="evidence at protein level"/>
<dbReference type="EC" id="1.3.99.32"/>
<dbReference type="EMBL" id="FJ688103">
    <property type="protein sequence ID" value="ACP50614.1"/>
    <property type="molecule type" value="Genomic_DNA"/>
</dbReference>
<dbReference type="RefSeq" id="WP_070962329.1">
    <property type="nucleotide sequence ID" value="NZ_CP015381.1"/>
</dbReference>
<dbReference type="PDB" id="3MPI">
    <property type="method" value="X-ray"/>
    <property type="resolution" value="2.05 A"/>
    <property type="chains" value="A/B/C/D=1-389"/>
</dbReference>
<dbReference type="PDB" id="3MPJ">
    <property type="method" value="X-ray"/>
    <property type="resolution" value="2.10 A"/>
    <property type="chains" value="A/B/D/E/F/G=1-389"/>
</dbReference>
<dbReference type="PDBsum" id="3MPI"/>
<dbReference type="PDBsum" id="3MPJ"/>
<dbReference type="SMR" id="C3UVB0"/>
<dbReference type="KEGG" id="dml:Dmul_25030"/>
<dbReference type="KEGG" id="dml:Dmul_34900"/>
<dbReference type="PATRIC" id="fig|897.4.peg.2846"/>
<dbReference type="BRENDA" id="1.3.99.32">
    <property type="organism ID" value="1889"/>
</dbReference>
<dbReference type="UniPathway" id="UPA00739"/>
<dbReference type="EvolutionaryTrace" id="C3UVB0"/>
<dbReference type="GO" id="GO:0003995">
    <property type="term" value="F:acyl-CoA dehydrogenase activity"/>
    <property type="evidence" value="ECO:0007669"/>
    <property type="project" value="InterPro"/>
</dbReference>
<dbReference type="GO" id="GO:0050660">
    <property type="term" value="F:flavin adenine dinucleotide binding"/>
    <property type="evidence" value="ECO:0007669"/>
    <property type="project" value="InterPro"/>
</dbReference>
<dbReference type="GO" id="GO:0009056">
    <property type="term" value="P:catabolic process"/>
    <property type="evidence" value="ECO:0007669"/>
    <property type="project" value="UniProtKB-KW"/>
</dbReference>
<dbReference type="FunFam" id="1.20.140.10:FF:000001">
    <property type="entry name" value="Acyl-CoA dehydrogenase"/>
    <property type="match status" value="1"/>
</dbReference>
<dbReference type="FunFam" id="2.40.110.10:FF:000002">
    <property type="entry name" value="Acyl-CoA dehydrogenase fadE12"/>
    <property type="match status" value="1"/>
</dbReference>
<dbReference type="FunFam" id="1.10.540.10:FF:000002">
    <property type="entry name" value="Acyl-CoA dehydrogenase FadE19"/>
    <property type="match status" value="1"/>
</dbReference>
<dbReference type="Gene3D" id="1.10.540.10">
    <property type="entry name" value="Acyl-CoA dehydrogenase/oxidase, N-terminal domain"/>
    <property type="match status" value="1"/>
</dbReference>
<dbReference type="Gene3D" id="2.40.110.10">
    <property type="entry name" value="Butyryl-CoA Dehydrogenase, subunit A, domain 2"/>
    <property type="match status" value="1"/>
</dbReference>
<dbReference type="Gene3D" id="1.20.140.10">
    <property type="entry name" value="Butyryl-CoA Dehydrogenase, subunit A, domain 3"/>
    <property type="match status" value="1"/>
</dbReference>
<dbReference type="InterPro" id="IPR006089">
    <property type="entry name" value="Acyl-CoA_DH_CS"/>
</dbReference>
<dbReference type="InterPro" id="IPR006091">
    <property type="entry name" value="Acyl-CoA_Oxase/DH_mid-dom"/>
</dbReference>
<dbReference type="InterPro" id="IPR046373">
    <property type="entry name" value="Acyl-CoA_Oxase/DH_mid-dom_sf"/>
</dbReference>
<dbReference type="InterPro" id="IPR036250">
    <property type="entry name" value="AcylCo_DH-like_C"/>
</dbReference>
<dbReference type="InterPro" id="IPR009075">
    <property type="entry name" value="AcylCo_DH/oxidase_C"/>
</dbReference>
<dbReference type="InterPro" id="IPR013786">
    <property type="entry name" value="AcylCoA_DH/ox_N"/>
</dbReference>
<dbReference type="InterPro" id="IPR037069">
    <property type="entry name" value="AcylCoA_DH/ox_N_sf"/>
</dbReference>
<dbReference type="InterPro" id="IPR009100">
    <property type="entry name" value="AcylCoA_DH/oxidase_NM_dom_sf"/>
</dbReference>
<dbReference type="InterPro" id="IPR054641">
    <property type="entry name" value="GlutCoADH_Des"/>
</dbReference>
<dbReference type="NCBIfam" id="NF045552">
    <property type="entry name" value="GlutCoADH_Des"/>
    <property type="match status" value="1"/>
</dbReference>
<dbReference type="PANTHER" id="PTHR43884">
    <property type="entry name" value="ACYL-COA DEHYDROGENASE"/>
    <property type="match status" value="1"/>
</dbReference>
<dbReference type="PANTHER" id="PTHR43884:SF12">
    <property type="entry name" value="ISOVALERYL-COA DEHYDROGENASE, MITOCHONDRIAL-RELATED"/>
    <property type="match status" value="1"/>
</dbReference>
<dbReference type="Pfam" id="PF00441">
    <property type="entry name" value="Acyl-CoA_dh_1"/>
    <property type="match status" value="1"/>
</dbReference>
<dbReference type="Pfam" id="PF02770">
    <property type="entry name" value="Acyl-CoA_dh_M"/>
    <property type="match status" value="1"/>
</dbReference>
<dbReference type="Pfam" id="PF02771">
    <property type="entry name" value="Acyl-CoA_dh_N"/>
    <property type="match status" value="1"/>
</dbReference>
<dbReference type="PIRSF" id="PIRSF016578">
    <property type="entry name" value="HsaA"/>
    <property type="match status" value="1"/>
</dbReference>
<dbReference type="SUPFAM" id="SSF47203">
    <property type="entry name" value="Acyl-CoA dehydrogenase C-terminal domain-like"/>
    <property type="match status" value="1"/>
</dbReference>
<dbReference type="SUPFAM" id="SSF56645">
    <property type="entry name" value="Acyl-CoA dehydrogenase NM domain-like"/>
    <property type="match status" value="1"/>
</dbReference>
<dbReference type="PROSITE" id="PS00072">
    <property type="entry name" value="ACYL_COA_DH_1"/>
    <property type="match status" value="1"/>
</dbReference>
<feature type="chain" id="PRO_0000418764" description="Glutaryl-CoA dehydrogenase">
    <location>
        <begin position="1"/>
        <end position="389"/>
    </location>
</feature>
<feature type="active site" description="Proton acceptor" evidence="3">
    <location>
        <position position="367"/>
    </location>
</feature>
<feature type="binding site" evidence="2">
    <location>
        <position position="87"/>
    </location>
    <ligand>
        <name>substrate</name>
    </ligand>
</feature>
<feature type="binding site" evidence="2">
    <location>
        <position position="91"/>
    </location>
    <ligand>
        <name>substrate</name>
    </ligand>
</feature>
<feature type="binding site" evidence="2">
    <location>
        <begin position="126"/>
        <end position="129"/>
    </location>
    <ligand>
        <name>FAD</name>
        <dbReference type="ChEBI" id="CHEBI:57692"/>
    </ligand>
</feature>
<feature type="binding site" evidence="2">
    <location>
        <position position="135"/>
    </location>
    <ligand>
        <name>FAD</name>
        <dbReference type="ChEBI" id="CHEBI:57692"/>
    </ligand>
</feature>
<feature type="binding site" evidence="2">
    <location>
        <position position="135"/>
    </location>
    <ligand>
        <name>substrate</name>
    </ligand>
</feature>
<feature type="binding site" evidence="2">
    <location>
        <begin position="159"/>
        <end position="161"/>
    </location>
    <ligand>
        <name>FAD</name>
        <dbReference type="ChEBI" id="CHEBI:57692"/>
    </ligand>
</feature>
<feature type="binding site" evidence="2">
    <location>
        <position position="181"/>
    </location>
    <ligand>
        <name>substrate</name>
    </ligand>
</feature>
<feature type="binding site" evidence="2">
    <location>
        <position position="271"/>
    </location>
    <ligand>
        <name>FAD</name>
        <dbReference type="ChEBI" id="CHEBI:57692"/>
    </ligand>
</feature>
<feature type="binding site" evidence="2">
    <location>
        <begin position="281"/>
        <end position="284"/>
    </location>
    <ligand>
        <name>FAD</name>
        <dbReference type="ChEBI" id="CHEBI:57692"/>
    </ligand>
</feature>
<feature type="binding site" evidence="2">
    <location>
        <position position="340"/>
    </location>
    <ligand>
        <name>FAD</name>
        <dbReference type="ChEBI" id="CHEBI:57692"/>
    </ligand>
</feature>
<feature type="binding site" evidence="2">
    <location>
        <position position="344"/>
    </location>
    <ligand>
        <name>FAD</name>
        <dbReference type="ChEBI" id="CHEBI:57692"/>
    </ligand>
</feature>
<feature type="binding site" evidence="2">
    <location>
        <begin position="367"/>
        <end position="371"/>
    </location>
    <ligand>
        <name>FAD</name>
        <dbReference type="ChEBI" id="CHEBI:57692"/>
    </ligand>
</feature>
<feature type="binding site" evidence="2">
    <location>
        <position position="385"/>
    </location>
    <ligand>
        <name>substrate</name>
    </ligand>
</feature>
<feature type="mutagenesis site" description="Loses the FAD cofactor and dehydrogenase activity." evidence="2">
    <original>A</original>
    <variation>E</variation>
    <location>
        <position position="80"/>
    </location>
</feature>
<feature type="mutagenesis site" description="A residual dehydrogenase activity is observed." evidence="2">
    <original>V</original>
    <variation>S</variation>
    <location>
        <position position="88"/>
    </location>
</feature>
<feature type="mutagenesis site" description="Loses the FAD cofactor but a residual dehydrogenase activity is observed." evidence="2">
    <original>V</original>
    <variation>Y</variation>
    <location>
        <position position="366"/>
    </location>
</feature>
<feature type="helix" evidence="4">
    <location>
        <begin position="7"/>
        <end position="23"/>
    </location>
</feature>
<feature type="turn" evidence="4">
    <location>
        <begin position="24"/>
        <end position="27"/>
    </location>
</feature>
<feature type="helix" evidence="4">
    <location>
        <begin position="28"/>
        <end position="34"/>
    </location>
</feature>
<feature type="turn" evidence="4">
    <location>
        <begin position="39"/>
        <end position="42"/>
    </location>
</feature>
<feature type="helix" evidence="4">
    <location>
        <begin position="43"/>
        <end position="48"/>
    </location>
</feature>
<feature type="turn" evidence="4">
    <location>
        <begin position="49"/>
        <end position="52"/>
    </location>
</feature>
<feature type="strand" evidence="5">
    <location>
        <begin position="54"/>
        <end position="56"/>
    </location>
</feature>
<feature type="helix" evidence="4">
    <location>
        <begin position="58"/>
        <end position="60"/>
    </location>
</feature>
<feature type="helix" evidence="4">
    <location>
        <begin position="68"/>
        <end position="82"/>
    </location>
</feature>
<feature type="helix" evidence="4">
    <location>
        <begin position="84"/>
        <end position="93"/>
    </location>
</feature>
<feature type="turn" evidence="4">
    <location>
        <begin position="94"/>
        <end position="97"/>
    </location>
</feature>
<feature type="helix" evidence="4">
    <location>
        <begin position="98"/>
        <end position="104"/>
    </location>
</feature>
<feature type="helix" evidence="4">
    <location>
        <begin position="107"/>
        <end position="118"/>
    </location>
</feature>
<feature type="strand" evidence="4">
    <location>
        <begin position="133"/>
        <end position="135"/>
    </location>
</feature>
<feature type="helix" evidence="4">
    <location>
        <begin position="137"/>
        <end position="139"/>
    </location>
</feature>
<feature type="strand" evidence="4">
    <location>
        <begin position="143"/>
        <end position="146"/>
    </location>
</feature>
<feature type="strand" evidence="4">
    <location>
        <begin position="148"/>
        <end position="161"/>
    </location>
</feature>
<feature type="turn" evidence="4">
    <location>
        <begin position="162"/>
        <end position="165"/>
    </location>
</feature>
<feature type="strand" evidence="4">
    <location>
        <begin position="167"/>
        <end position="175"/>
    </location>
</feature>
<feature type="helix" evidence="4">
    <location>
        <begin position="177"/>
        <end position="182"/>
    </location>
</feature>
<feature type="strand" evidence="4">
    <location>
        <begin position="183"/>
        <end position="189"/>
    </location>
</feature>
<feature type="turn" evidence="4">
    <location>
        <begin position="191"/>
        <end position="193"/>
    </location>
</feature>
<feature type="strand" evidence="4">
    <location>
        <begin position="197"/>
        <end position="201"/>
    </location>
</feature>
<feature type="strand" evidence="4">
    <location>
        <begin position="212"/>
        <end position="223"/>
    </location>
</feature>
<feature type="helix" evidence="4">
    <location>
        <begin position="224"/>
        <end position="226"/>
    </location>
</feature>
<feature type="strand" evidence="4">
    <location>
        <begin position="227"/>
        <end position="230"/>
    </location>
</feature>
<feature type="turn" evidence="5">
    <location>
        <begin position="231"/>
        <end position="233"/>
    </location>
</feature>
<feature type="helix" evidence="4">
    <location>
        <begin position="234"/>
        <end position="270"/>
    </location>
</feature>
<feature type="helix" evidence="4">
    <location>
        <begin position="278"/>
        <end position="280"/>
    </location>
</feature>
<feature type="helix" evidence="4">
    <location>
        <begin position="282"/>
        <end position="310"/>
    </location>
</feature>
<feature type="helix" evidence="4">
    <location>
        <begin position="317"/>
        <end position="342"/>
    </location>
</feature>
<feature type="helix" evidence="4">
    <location>
        <begin position="343"/>
        <end position="347"/>
    </location>
</feature>
<feature type="helix" evidence="4">
    <location>
        <begin position="352"/>
        <end position="359"/>
    </location>
</feature>
<feature type="helix" evidence="4">
    <location>
        <begin position="362"/>
        <end position="365"/>
    </location>
</feature>
<feature type="strand" evidence="4">
    <location>
        <begin position="366"/>
        <end position="368"/>
    </location>
</feature>
<feature type="helix" evidence="4">
    <location>
        <begin position="370"/>
        <end position="381"/>
    </location>
</feature>
<organism>
    <name type="scientific">Desulfococcus multivorans</name>
    <dbReference type="NCBI Taxonomy" id="897"/>
    <lineage>
        <taxon>Bacteria</taxon>
        <taxon>Pseudomonadati</taxon>
        <taxon>Thermodesulfobacteriota</taxon>
        <taxon>Desulfobacteria</taxon>
        <taxon>Desulfobacterales</taxon>
        <taxon>Desulfococcaceae</taxon>
        <taxon>Desulfococcus</taxon>
    </lineage>
</organism>